<keyword id="KW-0456">Lyase</keyword>
<keyword id="KW-0460">Magnesium</keyword>
<keyword id="KW-0464">Manganese</keyword>
<keyword id="KW-0479">Metal-binding</keyword>
<keyword id="KW-0686">Riboflavin biosynthesis</keyword>
<sequence length="217" mass="23310">MNQTLLSSFGTPFERVELALDALREGRGVMVLDDEDRENEGDMIFPAETMTVEQMALTIRHGSGIVCLCITEDRRKQLDLPMMVENNTSAYGTGFTVTIEAAEGVTTGVSAADRVTTVRAAIKDGAKPSDLNRPGHVFPLRAQAGGVLTRGGHTEATIDLMTLAGFKPAGVLCELTNDDGTMARAPECIAFAGQHNMAVVTIEDLVAYRQAHERKAS</sequence>
<evidence type="ECO:0000255" key="1">
    <source>
        <dbReference type="HAMAP-Rule" id="MF_00180"/>
    </source>
</evidence>
<reference key="1">
    <citation type="journal article" date="2011" name="J. Bacteriol.">
        <title>Comparative genomics of 28 Salmonella enterica isolates: evidence for CRISPR-mediated adaptive sublineage evolution.</title>
        <authorList>
            <person name="Fricke W.F."/>
            <person name="Mammel M.K."/>
            <person name="McDermott P.F."/>
            <person name="Tartera C."/>
            <person name="White D.G."/>
            <person name="Leclerc J.E."/>
            <person name="Ravel J."/>
            <person name="Cebula T.A."/>
        </authorList>
    </citation>
    <scope>NUCLEOTIDE SEQUENCE [LARGE SCALE GENOMIC DNA]</scope>
    <source>
        <strain>SL476</strain>
    </source>
</reference>
<gene>
    <name evidence="1" type="primary">ribB</name>
    <name type="ordered locus">SeHA_C3446</name>
</gene>
<accession>B4TI45</accession>
<feature type="chain" id="PRO_1000098287" description="3,4-dihydroxy-2-butanone 4-phosphate synthase">
    <location>
        <begin position="1"/>
        <end position="217"/>
    </location>
</feature>
<feature type="binding site" evidence="1">
    <location>
        <begin position="37"/>
        <end position="38"/>
    </location>
    <ligand>
        <name>D-ribulose 5-phosphate</name>
        <dbReference type="ChEBI" id="CHEBI:58121"/>
    </ligand>
</feature>
<feature type="binding site" evidence="1">
    <location>
        <position position="38"/>
    </location>
    <ligand>
        <name>Mg(2+)</name>
        <dbReference type="ChEBI" id="CHEBI:18420"/>
        <label>1</label>
    </ligand>
</feature>
<feature type="binding site" evidence="1">
    <location>
        <position position="38"/>
    </location>
    <ligand>
        <name>Mg(2+)</name>
        <dbReference type="ChEBI" id="CHEBI:18420"/>
        <label>2</label>
    </ligand>
</feature>
<feature type="binding site" evidence="1">
    <location>
        <position position="42"/>
    </location>
    <ligand>
        <name>D-ribulose 5-phosphate</name>
        <dbReference type="ChEBI" id="CHEBI:58121"/>
    </ligand>
</feature>
<feature type="binding site" evidence="1">
    <location>
        <begin position="150"/>
        <end position="154"/>
    </location>
    <ligand>
        <name>D-ribulose 5-phosphate</name>
        <dbReference type="ChEBI" id="CHEBI:58121"/>
    </ligand>
</feature>
<feature type="binding site" evidence="1">
    <location>
        <position position="153"/>
    </location>
    <ligand>
        <name>Mg(2+)</name>
        <dbReference type="ChEBI" id="CHEBI:18420"/>
        <label>2</label>
    </ligand>
</feature>
<feature type="binding site" evidence="1">
    <location>
        <position position="174"/>
    </location>
    <ligand>
        <name>D-ribulose 5-phosphate</name>
        <dbReference type="ChEBI" id="CHEBI:58121"/>
    </ligand>
</feature>
<feature type="site" description="Essential for catalytic activity" evidence="1">
    <location>
        <position position="136"/>
    </location>
</feature>
<feature type="site" description="Essential for catalytic activity" evidence="1">
    <location>
        <position position="174"/>
    </location>
</feature>
<protein>
    <recommendedName>
        <fullName evidence="1">3,4-dihydroxy-2-butanone 4-phosphate synthase</fullName>
        <shortName evidence="1">DHBP synthase</shortName>
        <ecNumber evidence="1">4.1.99.12</ecNumber>
    </recommendedName>
</protein>
<organism>
    <name type="scientific">Salmonella heidelberg (strain SL476)</name>
    <dbReference type="NCBI Taxonomy" id="454169"/>
    <lineage>
        <taxon>Bacteria</taxon>
        <taxon>Pseudomonadati</taxon>
        <taxon>Pseudomonadota</taxon>
        <taxon>Gammaproteobacteria</taxon>
        <taxon>Enterobacterales</taxon>
        <taxon>Enterobacteriaceae</taxon>
        <taxon>Salmonella</taxon>
    </lineage>
</organism>
<proteinExistence type="inferred from homology"/>
<dbReference type="EC" id="4.1.99.12" evidence="1"/>
<dbReference type="EMBL" id="CP001120">
    <property type="protein sequence ID" value="ACF68019.1"/>
    <property type="molecule type" value="Genomic_DNA"/>
</dbReference>
<dbReference type="RefSeq" id="WP_001076978.1">
    <property type="nucleotide sequence ID" value="NC_011083.1"/>
</dbReference>
<dbReference type="SMR" id="B4TI45"/>
<dbReference type="KEGG" id="seh:SeHA_C3446"/>
<dbReference type="HOGENOM" id="CLU_020273_3_0_6"/>
<dbReference type="UniPathway" id="UPA00275">
    <property type="reaction ID" value="UER00399"/>
</dbReference>
<dbReference type="Proteomes" id="UP000001866">
    <property type="component" value="Chromosome"/>
</dbReference>
<dbReference type="GO" id="GO:0005829">
    <property type="term" value="C:cytosol"/>
    <property type="evidence" value="ECO:0007669"/>
    <property type="project" value="TreeGrafter"/>
</dbReference>
<dbReference type="GO" id="GO:0008686">
    <property type="term" value="F:3,4-dihydroxy-2-butanone-4-phosphate synthase activity"/>
    <property type="evidence" value="ECO:0007669"/>
    <property type="project" value="UniProtKB-UniRule"/>
</dbReference>
<dbReference type="GO" id="GO:0000287">
    <property type="term" value="F:magnesium ion binding"/>
    <property type="evidence" value="ECO:0007669"/>
    <property type="project" value="UniProtKB-UniRule"/>
</dbReference>
<dbReference type="GO" id="GO:0030145">
    <property type="term" value="F:manganese ion binding"/>
    <property type="evidence" value="ECO:0007669"/>
    <property type="project" value="UniProtKB-UniRule"/>
</dbReference>
<dbReference type="GO" id="GO:0009231">
    <property type="term" value="P:riboflavin biosynthetic process"/>
    <property type="evidence" value="ECO:0007669"/>
    <property type="project" value="UniProtKB-UniRule"/>
</dbReference>
<dbReference type="FunFam" id="3.90.870.10:FF:000002">
    <property type="entry name" value="3,4-dihydroxy-2-butanone 4-phosphate synthase"/>
    <property type="match status" value="1"/>
</dbReference>
<dbReference type="Gene3D" id="3.90.870.10">
    <property type="entry name" value="DHBP synthase"/>
    <property type="match status" value="1"/>
</dbReference>
<dbReference type="HAMAP" id="MF_00180">
    <property type="entry name" value="RibB"/>
    <property type="match status" value="1"/>
</dbReference>
<dbReference type="InterPro" id="IPR017945">
    <property type="entry name" value="DHBP_synth_RibB-like_a/b_dom"/>
</dbReference>
<dbReference type="InterPro" id="IPR000422">
    <property type="entry name" value="DHBP_synthase_RibB"/>
</dbReference>
<dbReference type="NCBIfam" id="TIGR00506">
    <property type="entry name" value="ribB"/>
    <property type="match status" value="1"/>
</dbReference>
<dbReference type="PANTHER" id="PTHR21327:SF38">
    <property type="entry name" value="3,4-DIHYDROXY-2-BUTANONE 4-PHOSPHATE SYNTHASE"/>
    <property type="match status" value="1"/>
</dbReference>
<dbReference type="PANTHER" id="PTHR21327">
    <property type="entry name" value="GTP CYCLOHYDROLASE II-RELATED"/>
    <property type="match status" value="1"/>
</dbReference>
<dbReference type="Pfam" id="PF00926">
    <property type="entry name" value="DHBP_synthase"/>
    <property type="match status" value="1"/>
</dbReference>
<dbReference type="SUPFAM" id="SSF55821">
    <property type="entry name" value="YrdC/RibB"/>
    <property type="match status" value="1"/>
</dbReference>
<comment type="function">
    <text evidence="1">Catalyzes the conversion of D-ribulose 5-phosphate to formate and 3,4-dihydroxy-2-butanone 4-phosphate.</text>
</comment>
<comment type="catalytic activity">
    <reaction evidence="1">
        <text>D-ribulose 5-phosphate = (2S)-2-hydroxy-3-oxobutyl phosphate + formate + H(+)</text>
        <dbReference type="Rhea" id="RHEA:18457"/>
        <dbReference type="ChEBI" id="CHEBI:15378"/>
        <dbReference type="ChEBI" id="CHEBI:15740"/>
        <dbReference type="ChEBI" id="CHEBI:58121"/>
        <dbReference type="ChEBI" id="CHEBI:58830"/>
        <dbReference type="EC" id="4.1.99.12"/>
    </reaction>
</comment>
<comment type="cofactor">
    <cofactor evidence="1">
        <name>Mg(2+)</name>
        <dbReference type="ChEBI" id="CHEBI:18420"/>
    </cofactor>
    <cofactor evidence="1">
        <name>Mn(2+)</name>
        <dbReference type="ChEBI" id="CHEBI:29035"/>
    </cofactor>
    <text evidence="1">Binds 2 divalent metal cations per subunit. Magnesium or manganese.</text>
</comment>
<comment type="pathway">
    <text evidence="1">Cofactor biosynthesis; riboflavin biosynthesis; 2-hydroxy-3-oxobutyl phosphate from D-ribulose 5-phosphate: step 1/1.</text>
</comment>
<comment type="subunit">
    <text evidence="1">Homodimer.</text>
</comment>
<comment type="similarity">
    <text evidence="1">Belongs to the DHBP synthase family.</text>
</comment>
<name>RIBB_SALHS</name>